<name>RL21_CLOB1</name>
<keyword id="KW-0687">Ribonucleoprotein</keyword>
<keyword id="KW-0689">Ribosomal protein</keyword>
<keyword id="KW-0694">RNA-binding</keyword>
<keyword id="KW-0699">rRNA-binding</keyword>
<feature type="chain" id="PRO_1000067823" description="Large ribosomal subunit protein bL21">
    <location>
        <begin position="1"/>
        <end position="104"/>
    </location>
</feature>
<comment type="function">
    <text evidence="1">This protein binds to 23S rRNA in the presence of protein L20.</text>
</comment>
<comment type="subunit">
    <text evidence="1">Part of the 50S ribosomal subunit. Contacts protein L20.</text>
</comment>
<comment type="similarity">
    <text evidence="1">Belongs to the bacterial ribosomal protein bL21 family.</text>
</comment>
<protein>
    <recommendedName>
        <fullName evidence="1">Large ribosomal subunit protein bL21</fullName>
    </recommendedName>
    <alternativeName>
        <fullName evidence="2">50S ribosomal protein L21</fullName>
    </alternativeName>
</protein>
<organism>
    <name type="scientific">Clostridium botulinum (strain ATCC 19397 / Type A)</name>
    <dbReference type="NCBI Taxonomy" id="441770"/>
    <lineage>
        <taxon>Bacteria</taxon>
        <taxon>Bacillati</taxon>
        <taxon>Bacillota</taxon>
        <taxon>Clostridia</taxon>
        <taxon>Eubacteriales</taxon>
        <taxon>Clostridiaceae</taxon>
        <taxon>Clostridium</taxon>
    </lineage>
</organism>
<evidence type="ECO:0000255" key="1">
    <source>
        <dbReference type="HAMAP-Rule" id="MF_01363"/>
    </source>
</evidence>
<evidence type="ECO:0000305" key="2"/>
<proteinExistence type="inferred from homology"/>
<sequence>MYAVVVTGGKQYKVAEGDILFVEKLTADVDSTVELDNVLLVGKDNGETVVGKPMVEGAKVTAKVLAQGKAKKVVVFKYKPKKDYRKKQGHRQPYTKIQIEKINA</sequence>
<dbReference type="EMBL" id="CP000726">
    <property type="protein sequence ID" value="ABS35800.1"/>
    <property type="molecule type" value="Genomic_DNA"/>
</dbReference>
<dbReference type="RefSeq" id="WP_012048023.1">
    <property type="nucleotide sequence ID" value="NC_009697.1"/>
</dbReference>
<dbReference type="SMR" id="A7FXU9"/>
<dbReference type="GeneID" id="5185871"/>
<dbReference type="KEGG" id="cba:CLB_3014"/>
<dbReference type="HOGENOM" id="CLU_061463_3_2_9"/>
<dbReference type="GO" id="GO:0005737">
    <property type="term" value="C:cytoplasm"/>
    <property type="evidence" value="ECO:0007669"/>
    <property type="project" value="UniProtKB-ARBA"/>
</dbReference>
<dbReference type="GO" id="GO:1990904">
    <property type="term" value="C:ribonucleoprotein complex"/>
    <property type="evidence" value="ECO:0007669"/>
    <property type="project" value="UniProtKB-KW"/>
</dbReference>
<dbReference type="GO" id="GO:0005840">
    <property type="term" value="C:ribosome"/>
    <property type="evidence" value="ECO:0007669"/>
    <property type="project" value="UniProtKB-KW"/>
</dbReference>
<dbReference type="GO" id="GO:0019843">
    <property type="term" value="F:rRNA binding"/>
    <property type="evidence" value="ECO:0007669"/>
    <property type="project" value="UniProtKB-UniRule"/>
</dbReference>
<dbReference type="GO" id="GO:0003735">
    <property type="term" value="F:structural constituent of ribosome"/>
    <property type="evidence" value="ECO:0007669"/>
    <property type="project" value="InterPro"/>
</dbReference>
<dbReference type="GO" id="GO:0006412">
    <property type="term" value="P:translation"/>
    <property type="evidence" value="ECO:0007669"/>
    <property type="project" value="UniProtKB-UniRule"/>
</dbReference>
<dbReference type="HAMAP" id="MF_01363">
    <property type="entry name" value="Ribosomal_bL21"/>
    <property type="match status" value="1"/>
</dbReference>
<dbReference type="InterPro" id="IPR028909">
    <property type="entry name" value="bL21-like"/>
</dbReference>
<dbReference type="InterPro" id="IPR036164">
    <property type="entry name" value="bL21-like_sf"/>
</dbReference>
<dbReference type="InterPro" id="IPR001787">
    <property type="entry name" value="Ribosomal_bL21"/>
</dbReference>
<dbReference type="InterPro" id="IPR018258">
    <property type="entry name" value="Ribosomal_bL21_CS"/>
</dbReference>
<dbReference type="NCBIfam" id="TIGR00061">
    <property type="entry name" value="L21"/>
    <property type="match status" value="1"/>
</dbReference>
<dbReference type="PANTHER" id="PTHR21349">
    <property type="entry name" value="50S RIBOSOMAL PROTEIN L21"/>
    <property type="match status" value="1"/>
</dbReference>
<dbReference type="PANTHER" id="PTHR21349:SF0">
    <property type="entry name" value="LARGE RIBOSOMAL SUBUNIT PROTEIN BL21M"/>
    <property type="match status" value="1"/>
</dbReference>
<dbReference type="Pfam" id="PF00829">
    <property type="entry name" value="Ribosomal_L21p"/>
    <property type="match status" value="1"/>
</dbReference>
<dbReference type="SUPFAM" id="SSF141091">
    <property type="entry name" value="L21p-like"/>
    <property type="match status" value="1"/>
</dbReference>
<dbReference type="PROSITE" id="PS01169">
    <property type="entry name" value="RIBOSOMAL_L21"/>
    <property type="match status" value="1"/>
</dbReference>
<accession>A7FXU9</accession>
<gene>
    <name evidence="1" type="primary">rplU</name>
    <name type="ordered locus">CLB_3014</name>
</gene>
<reference key="1">
    <citation type="journal article" date="2007" name="PLoS ONE">
        <title>Analysis of the neurotoxin complex genes in Clostridium botulinum A1-A4 and B1 strains: BoNT/A3, /Ba4 and /B1 clusters are located within plasmids.</title>
        <authorList>
            <person name="Smith T.J."/>
            <person name="Hill K.K."/>
            <person name="Foley B.T."/>
            <person name="Detter J.C."/>
            <person name="Munk A.C."/>
            <person name="Bruce D.C."/>
            <person name="Doggett N.A."/>
            <person name="Smith L.A."/>
            <person name="Marks J.D."/>
            <person name="Xie G."/>
            <person name="Brettin T.S."/>
        </authorList>
    </citation>
    <scope>NUCLEOTIDE SEQUENCE [LARGE SCALE GENOMIC DNA]</scope>
    <source>
        <strain>ATCC 19397 / Type A</strain>
    </source>
</reference>